<name>MA1B1_HUMAN</name>
<dbReference type="EC" id="3.2.1.113" evidence="6 9 12"/>
<dbReference type="EMBL" id="AF148509">
    <property type="protein sequence ID" value="AAF03215.1"/>
    <property type="molecule type" value="mRNA"/>
</dbReference>
<dbReference type="EMBL" id="AF145732">
    <property type="protein sequence ID" value="AAD45504.1"/>
    <property type="molecule type" value="mRNA"/>
</dbReference>
<dbReference type="EMBL" id="AY358465">
    <property type="protein sequence ID" value="AAQ88830.1"/>
    <property type="molecule type" value="mRNA"/>
</dbReference>
<dbReference type="EMBL" id="AL929554">
    <property type="status" value="NOT_ANNOTATED_CDS"/>
    <property type="molecule type" value="Genomic_DNA"/>
</dbReference>
<dbReference type="EMBL" id="AL807752">
    <property type="status" value="NOT_ANNOTATED_CDS"/>
    <property type="molecule type" value="Genomic_DNA"/>
</dbReference>
<dbReference type="EMBL" id="BC002953">
    <property type="protein sequence ID" value="AAH02953.1"/>
    <property type="molecule type" value="mRNA"/>
</dbReference>
<dbReference type="EMBL" id="BC006079">
    <property type="protein sequence ID" value="AAH06079.1"/>
    <property type="molecule type" value="mRNA"/>
</dbReference>
<dbReference type="CCDS" id="CCDS7029.1"/>
<dbReference type="RefSeq" id="NP_057303.2">
    <property type="nucleotide sequence ID" value="NM_016219.5"/>
</dbReference>
<dbReference type="PDB" id="1FMI">
    <property type="method" value="X-ray"/>
    <property type="resolution" value="1.90 A"/>
    <property type="chains" value="A=243-697"/>
</dbReference>
<dbReference type="PDB" id="1FO2">
    <property type="method" value="X-ray"/>
    <property type="resolution" value="2.38 A"/>
    <property type="chains" value="A=243-699"/>
</dbReference>
<dbReference type="PDB" id="1FO3">
    <property type="method" value="X-ray"/>
    <property type="resolution" value="1.75 A"/>
    <property type="chains" value="A=243-699"/>
</dbReference>
<dbReference type="PDB" id="1X9D">
    <property type="method" value="X-ray"/>
    <property type="resolution" value="1.41 A"/>
    <property type="chains" value="A=172-699"/>
</dbReference>
<dbReference type="PDB" id="5KIJ">
    <property type="method" value="X-ray"/>
    <property type="resolution" value="1.65 A"/>
    <property type="chains" value="A=245-696"/>
</dbReference>
<dbReference type="PDB" id="5KK7">
    <property type="method" value="X-ray"/>
    <property type="resolution" value="1.73 A"/>
    <property type="chains" value="A/B=245-699"/>
</dbReference>
<dbReference type="PDBsum" id="1FMI"/>
<dbReference type="PDBsum" id="1FO2"/>
<dbReference type="PDBsum" id="1FO3"/>
<dbReference type="PDBsum" id="1X9D"/>
<dbReference type="PDBsum" id="5KIJ"/>
<dbReference type="PDBsum" id="5KK7"/>
<dbReference type="SMR" id="Q9UKM7"/>
<dbReference type="BioGRID" id="116414">
    <property type="interactions" value="124"/>
</dbReference>
<dbReference type="FunCoup" id="Q9UKM7">
    <property type="interactions" value="3134"/>
</dbReference>
<dbReference type="IntAct" id="Q9UKM7">
    <property type="interactions" value="40"/>
</dbReference>
<dbReference type="MINT" id="Q9UKM7"/>
<dbReference type="STRING" id="9606.ENSP00000360645"/>
<dbReference type="BindingDB" id="Q9UKM7"/>
<dbReference type="ChEMBL" id="CHEMBL2308"/>
<dbReference type="DrugBank" id="DB01955">
    <property type="generic name" value="1,4-Butanediol"/>
</dbReference>
<dbReference type="DrugBank" id="DB03206">
    <property type="generic name" value="Duvoglustat"/>
</dbReference>
<dbReference type="DrugBank" id="DB02742">
    <property type="generic name" value="Kifunensine"/>
</dbReference>
<dbReference type="DrugBank" id="DB02422">
    <property type="generic name" value="Methyl-2-S-(Alpha-D-Mannopyranosyl)-2-Thio-Alpha-D-Mannopyranoside"/>
</dbReference>
<dbReference type="CAZy" id="GH47">
    <property type="family name" value="Glycoside Hydrolase Family 47"/>
</dbReference>
<dbReference type="GlyCosmos" id="Q9UKM7">
    <property type="glycosylation" value="3 sites, 2 glycans"/>
</dbReference>
<dbReference type="GlyGen" id="Q9UKM7">
    <property type="glycosylation" value="14 sites, 4 O-linked glycans (13 sites)"/>
</dbReference>
<dbReference type="iPTMnet" id="Q9UKM7"/>
<dbReference type="PhosphoSitePlus" id="Q9UKM7"/>
<dbReference type="SwissPalm" id="Q9UKM7"/>
<dbReference type="BioMuta" id="MAN1B1"/>
<dbReference type="DMDM" id="93195043"/>
<dbReference type="jPOST" id="Q9UKM7"/>
<dbReference type="MassIVE" id="Q9UKM7"/>
<dbReference type="PaxDb" id="9606-ENSP00000360645"/>
<dbReference type="PeptideAtlas" id="Q9UKM7"/>
<dbReference type="ProteomicsDB" id="84820"/>
<dbReference type="Pumba" id="Q9UKM7"/>
<dbReference type="Antibodypedia" id="32359">
    <property type="antibodies" value="137 antibodies from 24 providers"/>
</dbReference>
<dbReference type="DNASU" id="11253"/>
<dbReference type="Ensembl" id="ENST00000371589.9">
    <property type="protein sequence ID" value="ENSP00000360645.4"/>
    <property type="gene ID" value="ENSG00000177239.16"/>
</dbReference>
<dbReference type="GeneID" id="11253"/>
<dbReference type="KEGG" id="hsa:11253"/>
<dbReference type="MANE-Select" id="ENST00000371589.9">
    <property type="protein sequence ID" value="ENSP00000360645.4"/>
    <property type="RefSeq nucleotide sequence ID" value="NM_016219.5"/>
    <property type="RefSeq protein sequence ID" value="NP_057303.2"/>
</dbReference>
<dbReference type="UCSC" id="uc004cld.3">
    <property type="organism name" value="human"/>
</dbReference>
<dbReference type="AGR" id="HGNC:6823"/>
<dbReference type="CTD" id="11253"/>
<dbReference type="DisGeNET" id="11253"/>
<dbReference type="GeneCards" id="MAN1B1"/>
<dbReference type="HGNC" id="HGNC:6823">
    <property type="gene designation" value="MAN1B1"/>
</dbReference>
<dbReference type="HPA" id="ENSG00000177239">
    <property type="expression patterns" value="Low tissue specificity"/>
</dbReference>
<dbReference type="MalaCards" id="MAN1B1"/>
<dbReference type="MIM" id="604346">
    <property type="type" value="gene"/>
</dbReference>
<dbReference type="MIM" id="614202">
    <property type="type" value="phenotype"/>
</dbReference>
<dbReference type="neXtProt" id="NX_Q9UKM7"/>
<dbReference type="OpenTargets" id="ENSG00000177239"/>
<dbReference type="Orphanet" id="88616">
    <property type="disease" value="Autosomal recessive non-syndromic intellectual disability"/>
</dbReference>
<dbReference type="Orphanet" id="397941">
    <property type="disease" value="MAN1B1-CDG"/>
</dbReference>
<dbReference type="PharmGKB" id="PA30572"/>
<dbReference type="VEuPathDB" id="HostDB:ENSG00000177239"/>
<dbReference type="eggNOG" id="KOG2431">
    <property type="taxonomic scope" value="Eukaryota"/>
</dbReference>
<dbReference type="GeneTree" id="ENSGT00940000155422"/>
<dbReference type="HOGENOM" id="CLU_003818_3_3_1"/>
<dbReference type="InParanoid" id="Q9UKM7"/>
<dbReference type="OMA" id="AAFKHSW"/>
<dbReference type="OrthoDB" id="8118055at2759"/>
<dbReference type="PAN-GO" id="Q9UKM7">
    <property type="GO annotations" value="5 GO annotations based on evolutionary models"/>
</dbReference>
<dbReference type="PhylomeDB" id="Q9UKM7"/>
<dbReference type="TreeFam" id="TF354274"/>
<dbReference type="BioCyc" id="MetaCyc:HS11144-MONOMER"/>
<dbReference type="BRENDA" id="3.2.1.113">
    <property type="organism ID" value="2681"/>
</dbReference>
<dbReference type="BRENDA" id="3.2.1.209">
    <property type="organism ID" value="2681"/>
</dbReference>
<dbReference type="PathwayCommons" id="Q9UKM7"/>
<dbReference type="Reactome" id="R-HSA-4793950">
    <property type="pathway name" value="Defective MAN1B1 causes MRT15"/>
</dbReference>
<dbReference type="Reactome" id="R-HSA-901032">
    <property type="pathway name" value="ER Quality Control Compartment (ERQC)"/>
</dbReference>
<dbReference type="Reactome" id="R-HSA-9694548">
    <property type="pathway name" value="Maturation of spike protein"/>
</dbReference>
<dbReference type="SABIO-RK" id="Q9UKM7"/>
<dbReference type="SignaLink" id="Q9UKM7"/>
<dbReference type="UniPathway" id="UPA00378"/>
<dbReference type="BioGRID-ORCS" id="11253">
    <property type="hits" value="28 hits in 1158 CRISPR screens"/>
</dbReference>
<dbReference type="ChiTaRS" id="MAN1B1">
    <property type="organism name" value="human"/>
</dbReference>
<dbReference type="EvolutionaryTrace" id="Q9UKM7"/>
<dbReference type="GeneWiki" id="MAN1B1"/>
<dbReference type="GenomeRNAi" id="11253"/>
<dbReference type="Pharos" id="Q9UKM7">
    <property type="development level" value="Tchem"/>
</dbReference>
<dbReference type="PRO" id="PR:Q9UKM7"/>
<dbReference type="Proteomes" id="UP000005640">
    <property type="component" value="Chromosome 9"/>
</dbReference>
<dbReference type="RNAct" id="Q9UKM7">
    <property type="molecule type" value="protein"/>
</dbReference>
<dbReference type="Bgee" id="ENSG00000177239">
    <property type="expression patterns" value="Expressed in stromal cell of endometrium and 188 other cell types or tissues"/>
</dbReference>
<dbReference type="ExpressionAtlas" id="Q9UKM7">
    <property type="expression patterns" value="baseline and differential"/>
</dbReference>
<dbReference type="GO" id="GO:0031410">
    <property type="term" value="C:cytoplasmic vesicle"/>
    <property type="evidence" value="ECO:0000314"/>
    <property type="project" value="UniProtKB"/>
</dbReference>
<dbReference type="GO" id="GO:0005783">
    <property type="term" value="C:endoplasmic reticulum"/>
    <property type="evidence" value="ECO:0000314"/>
    <property type="project" value="UniProtKB"/>
</dbReference>
<dbReference type="GO" id="GO:0005789">
    <property type="term" value="C:endoplasmic reticulum membrane"/>
    <property type="evidence" value="ECO:0007669"/>
    <property type="project" value="UniProtKB-SubCell"/>
</dbReference>
<dbReference type="GO" id="GO:0044322">
    <property type="term" value="C:endoplasmic reticulum quality control compartment"/>
    <property type="evidence" value="ECO:0000314"/>
    <property type="project" value="ParkinsonsUK-UCL"/>
</dbReference>
<dbReference type="GO" id="GO:1903561">
    <property type="term" value="C:extracellular vesicle"/>
    <property type="evidence" value="ECO:0007005"/>
    <property type="project" value="UniProtKB"/>
</dbReference>
<dbReference type="GO" id="GO:0005794">
    <property type="term" value="C:Golgi apparatus"/>
    <property type="evidence" value="ECO:0000304"/>
    <property type="project" value="ParkinsonsUK-UCL"/>
</dbReference>
<dbReference type="GO" id="GO:0016020">
    <property type="term" value="C:membrane"/>
    <property type="evidence" value="ECO:0000314"/>
    <property type="project" value="UniProtKB"/>
</dbReference>
<dbReference type="GO" id="GO:0005509">
    <property type="term" value="F:calcium ion binding"/>
    <property type="evidence" value="ECO:0000304"/>
    <property type="project" value="UniProtKB"/>
</dbReference>
<dbReference type="GO" id="GO:0004571">
    <property type="term" value="F:mannosyl-oligosaccharide 1,2-alpha-mannosidase activity"/>
    <property type="evidence" value="ECO:0000314"/>
    <property type="project" value="UniProtKB"/>
</dbReference>
<dbReference type="GO" id="GO:1904380">
    <property type="term" value="P:endoplasmic reticulum mannose trimming"/>
    <property type="evidence" value="ECO:0000304"/>
    <property type="project" value="Reactome"/>
</dbReference>
<dbReference type="GO" id="GO:0036503">
    <property type="term" value="P:ERAD pathway"/>
    <property type="evidence" value="ECO:0000315"/>
    <property type="project" value="UniProtKB"/>
</dbReference>
<dbReference type="GO" id="GO:0006058">
    <property type="term" value="P:mannoprotein catabolic process"/>
    <property type="evidence" value="ECO:0000314"/>
    <property type="project" value="ParkinsonsUK-UCL"/>
</dbReference>
<dbReference type="GO" id="GO:0009311">
    <property type="term" value="P:oligosaccharide metabolic process"/>
    <property type="evidence" value="ECO:0000304"/>
    <property type="project" value="ProtInc"/>
</dbReference>
<dbReference type="GO" id="GO:0036508">
    <property type="term" value="P:protein alpha-1,2-demannosylation"/>
    <property type="evidence" value="ECO:0000303"/>
    <property type="project" value="UniProtKB"/>
</dbReference>
<dbReference type="GO" id="GO:0006486">
    <property type="term" value="P:protein glycosylation"/>
    <property type="evidence" value="ECO:0007669"/>
    <property type="project" value="UniProtKB-UniPathway"/>
</dbReference>
<dbReference type="GO" id="GO:0019082">
    <property type="term" value="P:viral protein processing"/>
    <property type="evidence" value="ECO:0000304"/>
    <property type="project" value="Reactome"/>
</dbReference>
<dbReference type="FunFam" id="1.50.10.10:FF:000010">
    <property type="entry name" value="alpha-1,2-Mannosidase"/>
    <property type="match status" value="1"/>
</dbReference>
<dbReference type="Gene3D" id="1.50.10.10">
    <property type="match status" value="1"/>
</dbReference>
<dbReference type="InterPro" id="IPR012341">
    <property type="entry name" value="6hp_glycosidase-like_sf"/>
</dbReference>
<dbReference type="InterPro" id="IPR001382">
    <property type="entry name" value="Glyco_hydro_47"/>
</dbReference>
<dbReference type="InterPro" id="IPR050749">
    <property type="entry name" value="Glycosyl_Hydrolase_47"/>
</dbReference>
<dbReference type="InterPro" id="IPR036026">
    <property type="entry name" value="Seven-hairpin_glycosidases"/>
</dbReference>
<dbReference type="PANTHER" id="PTHR11742:SF55">
    <property type="entry name" value="ENDOPLASMIC RETICULUM MANNOSYL-OLIGOSACCHARIDE 1,2-ALPHA-MANNOSIDASE"/>
    <property type="match status" value="1"/>
</dbReference>
<dbReference type="PANTHER" id="PTHR11742">
    <property type="entry name" value="MANNOSYL-OLIGOSACCHARIDE ALPHA-1,2-MANNOSIDASE-RELATED"/>
    <property type="match status" value="1"/>
</dbReference>
<dbReference type="Pfam" id="PF01532">
    <property type="entry name" value="Glyco_hydro_47"/>
    <property type="match status" value="1"/>
</dbReference>
<dbReference type="PRINTS" id="PR00747">
    <property type="entry name" value="GLYHDRLASE47"/>
</dbReference>
<dbReference type="SUPFAM" id="SSF48225">
    <property type="entry name" value="Seven-hairpin glycosidases"/>
    <property type="match status" value="1"/>
</dbReference>
<gene>
    <name type="primary">MAN1B1</name>
    <name type="ORF">UNQ747/PRO1477</name>
</gene>
<organism>
    <name type="scientific">Homo sapiens</name>
    <name type="common">Human</name>
    <dbReference type="NCBI Taxonomy" id="9606"/>
    <lineage>
        <taxon>Eukaryota</taxon>
        <taxon>Metazoa</taxon>
        <taxon>Chordata</taxon>
        <taxon>Craniata</taxon>
        <taxon>Vertebrata</taxon>
        <taxon>Euteleostomi</taxon>
        <taxon>Mammalia</taxon>
        <taxon>Eutheria</taxon>
        <taxon>Euarchontoglires</taxon>
        <taxon>Primates</taxon>
        <taxon>Haplorrhini</taxon>
        <taxon>Catarrhini</taxon>
        <taxon>Hominidae</taxon>
        <taxon>Homo</taxon>
    </lineage>
</organism>
<proteinExistence type="evidence at protein level"/>
<comment type="function">
    <text evidence="9 13">Involved in glycoprotein quality control targeting of misfolded glycoproteins for degradation. It primarily trims a single alpha-1,2-linked mannose residue from Man(9)GlcNAc(2) to produce Man(8)GlcNAc(2), but at high enzyme concentrations, as found in the ER quality control compartment (ERQC), it further trims the carbohydrates to Man(5-6)GlcNAc(2).</text>
</comment>
<comment type="catalytic activity">
    <reaction evidence="6 9 12">
        <text>N(4)-(alpha-D-Man-(1-&gt;2)-alpha-D-Man-(1-&gt;2)-alpha-D-Man-(1-&gt;3)-[alpha-D-Man-(1-&gt;2)-alpha-D-Man-(1-&gt;3)-[alpha-D-Man-(1-&gt;2)-alpha-D-Man-(1-&gt;6)]-alpha-D-Man-(1-&gt;6)]-beta-D-Man-(1-&gt;4)-beta-D-GlcNAc-(1-&gt;4)-beta-D-GlcNAc)-L-asparaginyl-[protein] (N-glucan mannose isomer 9A1,2,3B1,2,3) + 4 H2O = N(4)-(alpha-D-Man-(1-&gt;3)-[alpha-D-Man-(1-&gt;3)-[alpha-D-Man-(1-&gt;6)]-alpha-D-Man-(1-&gt;6)]-beta-D-Man-(1-&gt;4)-beta-D-GlcNAc-(1-&gt;4)-beta-D-GlcNAc)-L-asparaginyl-[protein] (N-glucan mannose isomer 5A1,2) + 4 beta-D-mannose</text>
        <dbReference type="Rhea" id="RHEA:56008"/>
        <dbReference type="Rhea" id="RHEA-COMP:14356"/>
        <dbReference type="Rhea" id="RHEA-COMP:14367"/>
        <dbReference type="ChEBI" id="CHEBI:15377"/>
        <dbReference type="ChEBI" id="CHEBI:28563"/>
        <dbReference type="ChEBI" id="CHEBI:59087"/>
        <dbReference type="ChEBI" id="CHEBI:139493"/>
        <dbReference type="EC" id="3.2.1.113"/>
    </reaction>
</comment>
<comment type="catalytic activity">
    <reaction evidence="6 9 12">
        <text>N(4)-(alpha-D-Man-(1-&gt;2)-alpha-D-Man-(1-&gt;2)-alpha-D-Man-(1-&gt;3)-[alpha-D-Man-(1-&gt;3)-[alpha-D-Man-(1-&gt;2)-alpha-D-Man-(1-&gt;6)]-alpha-D-Man-(1-&gt;6)]-beta-D-Man-(1-&gt;4)-beta-D-GlcNAc-(1-&gt;4)-beta-D-GlcNAc)-L-asparaginyl-[protein] (N-glucan mannose isomer 8A1,2,3B1,3) + 3 H2O = N(4)-(alpha-D-Man-(1-&gt;3)-[alpha-D-Man-(1-&gt;3)-[alpha-D-Man-(1-&gt;6)]-alpha-D-Man-(1-&gt;6)]-beta-D-Man-(1-&gt;4)-beta-D-GlcNAc-(1-&gt;4)-beta-D-GlcNAc)-L-asparaginyl-[protein] (N-glucan mannose isomer 5A1,2) + 3 beta-D-mannose</text>
        <dbReference type="Rhea" id="RHEA:56028"/>
        <dbReference type="Rhea" id="RHEA-COMP:14358"/>
        <dbReference type="Rhea" id="RHEA-COMP:14367"/>
        <dbReference type="ChEBI" id="CHEBI:15377"/>
        <dbReference type="ChEBI" id="CHEBI:28563"/>
        <dbReference type="ChEBI" id="CHEBI:59087"/>
        <dbReference type="ChEBI" id="CHEBI:60628"/>
        <dbReference type="EC" id="3.2.1.113"/>
    </reaction>
</comment>
<comment type="cofactor">
    <cofactor evidence="3">
        <name>Ca(2+)</name>
        <dbReference type="ChEBI" id="CHEBI:29108"/>
    </cofactor>
</comment>
<comment type="activity regulation">
    <text evidence="6">Inhibited by both 1-deoxymannojirimycin (dMNJ) and kifunensine.</text>
</comment>
<comment type="biophysicochemical properties">
    <kinetics>
        <KM evidence="7">0.4 mM for Man9GlcNAc2</KM>
    </kinetics>
    <phDependence>
        <text evidence="7">Optimum pH is between 6.5 and 6.9.</text>
    </phDependence>
</comment>
<comment type="pathway">
    <text evidence="2">Protein modification; protein glycosylation.</text>
</comment>
<comment type="subcellular location">
    <subcellularLocation>
        <location evidence="6">Endoplasmic reticulum membrane</location>
        <topology evidence="6">Single-pass type II membrane protein</topology>
    </subcellularLocation>
</comment>
<comment type="tissue specificity">
    <text evidence="6 7">Widely expressed.</text>
</comment>
<comment type="disease" evidence="14">
    <disease id="DI-03241">
        <name>Rafiq syndrome</name>
        <acronym>RAFQS</acronym>
        <description>An autosomal recessive disorder characterized by variably impaired intellectual and motor development, a characteristic facial dysmorphism, truncal obesity, and hypotonia. The facial dysmorphism comprises prominent eyebrows with lateral thinning, downward-slanting palpebral fissures, bulbous tip of the nose, large ears, and a thin upper lip. Behavioral problems, including overeating, verbal and physical aggression, have been reported in some cases. Serum transferrin isoelectric focusing shows a type 2 pattern.</description>
        <dbReference type="MIM" id="614202"/>
    </disease>
    <text>The disease is caused by variants affecting the gene represented in this entry.</text>
</comment>
<comment type="similarity">
    <text evidence="15">Belongs to the glycosyl hydrolase 47 family.</text>
</comment>
<comment type="caution">
    <text evidence="15">It is uncertain whether Met-1 or Met-37 is the initiator.</text>
</comment>
<keyword id="KW-0002">3D-structure</keyword>
<keyword id="KW-0106">Calcium</keyword>
<keyword id="KW-0225">Disease variant</keyword>
<keyword id="KW-1015">Disulfide bond</keyword>
<keyword id="KW-0256">Endoplasmic reticulum</keyword>
<keyword id="KW-0326">Glycosidase</keyword>
<keyword id="KW-0378">Hydrolase</keyword>
<keyword id="KW-0991">Intellectual disability</keyword>
<keyword id="KW-0472">Membrane</keyword>
<keyword id="KW-0479">Metal-binding</keyword>
<keyword id="KW-1267">Proteomics identification</keyword>
<keyword id="KW-1185">Reference proteome</keyword>
<keyword id="KW-0735">Signal-anchor</keyword>
<keyword id="KW-0812">Transmembrane</keyword>
<keyword id="KW-1133">Transmembrane helix</keyword>
<protein>
    <recommendedName>
        <fullName>Endoplasmic reticulum mannosyl-oligosaccharide 1,2-alpha-mannosidase</fullName>
        <ecNumber evidence="6 9 12">3.2.1.113</ecNumber>
    </recommendedName>
    <alternativeName>
        <fullName>ER alpha-1,2-mannosidase</fullName>
    </alternativeName>
    <alternativeName>
        <fullName>ER mannosidase 1</fullName>
        <shortName>ERMan1</shortName>
    </alternativeName>
    <alternativeName>
        <fullName>Man9GlcNAc2-specific-processing alpha-mannosidase</fullName>
    </alternativeName>
    <alternativeName>
        <fullName>Mannosidase alpha class 1B member 1</fullName>
    </alternativeName>
</protein>
<sequence length="699" mass="79580">MAACEGRRSGALGSSQSDFLTPPVGGAPWAVATTVVMYPPPPPPPHRDFISVTLSFGENYDNSKSWRRRSCWRKWKQLSRLQRNMILFLLAFLLFCGLLFYINLADHWKALAFRLEEEQKMRPEIAGLKPANPPVLPAPQKADTDPENLPEISSQKTQRHIQRGPPHLQIRPPSQDLKDGTQEEATKRQEAPVDPRPEGDPQRTVISWRGAVIEPEQGTELPSRRAEVPTKPPLPPARTQGTPVHLNYRQKGVIDVFLHAWKGYRKFAWGHDELKPVSRSFSEWFGLGLTLIDALDTMWILGLRKEFEEARKWVSKKLHFEKDVDVNLFESTIRILGGLLSAYHLSGDSLFLRKAEDFGNRLMPAFRTPSKIPYSDVNIGTGVAHPPRWTSDSTVAEVTSIQLEFRELSRLTGDKKFQEAVEKVTQHIHGLSGKKDGLVPMFINTHSGLFTHLGVFTLGARADSYYEYLLKQWIQGGKQETQLLEDYVEAIEGVRTHLLRHSEPSKLTFVGELAHGRFSAKMDHLVCFLPGTLALGVYHGLPASHMELAQELMETCYQMNRQMETGLSPEIVHFNLYPQPGRRDVEVKPADRHNLLRPETVESLFYLYRVTGDRKYQDWGWEILQSFSRFTRVPSGGYSSINNVQDPQKPEPRDKMESFFLGETLKYLFLLFSDDPNLLSLDAYVFNTEAHPLPIWTPA</sequence>
<feature type="chain" id="PRO_0000210314" description="Endoplasmic reticulum mannosyl-oligosaccharide 1,2-alpha-mannosidase">
    <location>
        <begin position="1"/>
        <end position="699"/>
    </location>
</feature>
<feature type="topological domain" description="Cytoplasmic" evidence="4">
    <location>
        <begin position="1"/>
        <end position="84"/>
    </location>
</feature>
<feature type="transmembrane region" description="Helical; Signal-anchor for type II membrane protein" evidence="4">
    <location>
        <begin position="85"/>
        <end position="105"/>
    </location>
</feature>
<feature type="topological domain" description="Lumenal" evidence="4">
    <location>
        <begin position="106"/>
        <end position="699"/>
    </location>
</feature>
<feature type="region of interest" description="Disordered" evidence="5">
    <location>
        <begin position="125"/>
        <end position="243"/>
    </location>
</feature>
<feature type="compositionally biased region" description="Basic and acidic residues" evidence="5">
    <location>
        <begin position="176"/>
        <end position="201"/>
    </location>
</feature>
<feature type="active site" description="Proton donor" evidence="15">
    <location>
        <position position="330"/>
    </location>
</feature>
<feature type="active site" evidence="15">
    <location>
        <position position="463"/>
    </location>
</feature>
<feature type="active site" description="Proton donor" evidence="1">
    <location>
        <position position="570"/>
    </location>
</feature>
<feature type="active site" evidence="15">
    <location>
        <position position="599"/>
    </location>
</feature>
<feature type="binding site" evidence="2">
    <location>
        <position position="688"/>
    </location>
    <ligand>
        <name>Ca(2+)</name>
        <dbReference type="ChEBI" id="CHEBI:29108"/>
    </ligand>
</feature>
<feature type="disulfide bond" evidence="8">
    <location>
        <begin position="527"/>
        <end position="556"/>
    </location>
</feature>
<feature type="sequence variant" id="VAR_055841" description="In dbSNP:rs968733." evidence="6 7 10 11">
    <original>N</original>
    <variation>S</variation>
    <location>
        <position position="59"/>
    </location>
</feature>
<feature type="sequence variant" id="VAR_066592" description="In RAFQS; results in about 1300-fold decrease in activity; dbSNP:rs387906886." evidence="14">
    <original>R</original>
    <variation>C</variation>
    <location>
        <position position="334"/>
    </location>
</feature>
<feature type="sequence variant" id="VAR_066593" description="In RAFQS; disrupts stable protein expression; dbSNP:rs387906885." evidence="14">
    <original>E</original>
    <variation>K</variation>
    <location>
        <position position="397"/>
    </location>
</feature>
<feature type="mutagenesis site" description="About 44-fold reduction in K(cat), slight reduction in K(m), about 100-fold increase in binding affinity for Man(9)GlcnAc(2) but no change in binding affinity for the inhibitor, dMNJ. Even further greater reduction in K(cat) and increase in K(m); when associated with Q-599." evidence="12">
    <original>E</original>
    <variation>Q</variation>
    <location>
        <position position="330"/>
    </location>
</feature>
<feature type="mutagenesis site" description="Some reduction in K(cat) but no change in K(m), abolishes almost all binding to Man(9)GlcnAc(2) but reduced binding to the inhibitor dMNJ by about 73-fold. Further reduction in K(m) but slight increase in K(m); when associated with Q-599." evidence="12">
    <original>D</original>
    <variation>N</variation>
    <location>
        <position position="463"/>
    </location>
</feature>
<feature type="mutagenesis site" description="About 4-fold reduction in K(cat)." evidence="12">
    <original>H</original>
    <variation>A</variation>
    <location>
        <position position="524"/>
    </location>
</feature>
<feature type="mutagenesis site" description="Very significant reduction in K(cat), 4-fold weaker binding affinity for Man(9)GlcnAc(2) but about 1000-fold reduction in binding affinity for the inhibitor, dMNJ. Significant reductions in K(cat) and slight increase in K(m); when associated with E-330 or N-463." evidence="12">
    <original>E</original>
    <variation>Q</variation>
    <location>
        <position position="599"/>
    </location>
</feature>
<feature type="sequence conflict" description="In Ref. 2; AAD45504." evidence="15" ref="2">
    <original>T</original>
    <variation>A</variation>
    <location>
        <position position="204"/>
    </location>
</feature>
<feature type="sequence conflict" description="In Ref. 2; AAD45504." evidence="15" ref="2">
    <original>S</original>
    <variation>P</variation>
    <location>
        <position position="223"/>
    </location>
</feature>
<feature type="strand" evidence="17">
    <location>
        <begin position="244"/>
        <end position="246"/>
    </location>
</feature>
<feature type="helix" evidence="18">
    <location>
        <begin position="248"/>
        <end position="267"/>
    </location>
</feature>
<feature type="strand" evidence="18">
    <location>
        <begin position="271"/>
        <end position="275"/>
    </location>
</feature>
<feature type="turn" evidence="18">
    <location>
        <begin position="276"/>
        <end position="279"/>
    </location>
</feature>
<feature type="strand" evidence="18">
    <location>
        <begin position="280"/>
        <end position="282"/>
    </location>
</feature>
<feature type="strand" evidence="18">
    <location>
        <begin position="284"/>
        <end position="287"/>
    </location>
</feature>
<feature type="helix" evidence="18">
    <location>
        <begin position="289"/>
        <end position="300"/>
    </location>
</feature>
<feature type="helix" evidence="18">
    <location>
        <begin position="304"/>
        <end position="317"/>
    </location>
</feature>
<feature type="strand" evidence="18">
    <location>
        <begin position="325"/>
        <end position="327"/>
    </location>
</feature>
<feature type="helix" evidence="18">
    <location>
        <begin position="328"/>
        <end position="346"/>
    </location>
</feature>
<feature type="helix" evidence="18">
    <location>
        <begin position="349"/>
        <end position="362"/>
    </location>
</feature>
<feature type="helix" evidence="18">
    <location>
        <begin position="363"/>
        <end position="366"/>
    </location>
</feature>
<feature type="strand" evidence="17">
    <location>
        <begin position="368"/>
        <end position="370"/>
    </location>
</feature>
<feature type="strand" evidence="18">
    <location>
        <begin position="375"/>
        <end position="378"/>
    </location>
</feature>
<feature type="turn" evidence="18">
    <location>
        <begin position="379"/>
        <end position="381"/>
    </location>
</feature>
<feature type="strand" evidence="18">
    <location>
        <begin position="391"/>
        <end position="394"/>
    </location>
</feature>
<feature type="helix" evidence="18">
    <location>
        <begin position="395"/>
        <end position="399"/>
    </location>
</feature>
<feature type="helix" evidence="18">
    <location>
        <begin position="402"/>
        <end position="412"/>
    </location>
</feature>
<feature type="helix" evidence="18">
    <location>
        <begin position="416"/>
        <end position="429"/>
    </location>
</feature>
<feature type="strand" evidence="18">
    <location>
        <begin position="441"/>
        <end position="444"/>
    </location>
</feature>
<feature type="turn" evidence="18">
    <location>
        <begin position="445"/>
        <end position="447"/>
    </location>
</feature>
<feature type="strand" evidence="18">
    <location>
        <begin position="450"/>
        <end position="452"/>
    </location>
</feature>
<feature type="turn" evidence="18">
    <location>
        <begin position="460"/>
        <end position="462"/>
    </location>
</feature>
<feature type="helix" evidence="18">
    <location>
        <begin position="463"/>
        <end position="475"/>
    </location>
</feature>
<feature type="helix" evidence="18">
    <location>
        <begin position="481"/>
        <end position="497"/>
    </location>
</feature>
<feature type="strand" evidence="18">
    <location>
        <begin position="499"/>
        <end position="501"/>
    </location>
</feature>
<feature type="turn" evidence="18">
    <location>
        <begin position="503"/>
        <end position="505"/>
    </location>
</feature>
<feature type="strand" evidence="18">
    <location>
        <begin position="508"/>
        <end position="510"/>
    </location>
</feature>
<feature type="strand" evidence="18">
    <location>
        <begin position="512"/>
        <end position="514"/>
    </location>
</feature>
<feature type="strand" evidence="18">
    <location>
        <begin position="517"/>
        <end position="519"/>
    </location>
</feature>
<feature type="strand" evidence="18">
    <location>
        <begin position="521"/>
        <end position="523"/>
    </location>
</feature>
<feature type="helix" evidence="18">
    <location>
        <begin position="524"/>
        <end position="527"/>
    </location>
</feature>
<feature type="helix" evidence="18">
    <location>
        <begin position="528"/>
        <end position="538"/>
    </location>
</feature>
<feature type="helix" evidence="18">
    <location>
        <begin position="543"/>
        <end position="561"/>
    </location>
</feature>
<feature type="strand" evidence="16">
    <location>
        <begin position="563"/>
        <end position="566"/>
    </location>
</feature>
<feature type="strand" evidence="18">
    <location>
        <begin position="570"/>
        <end position="573"/>
    </location>
</feature>
<feature type="strand" evidence="19">
    <location>
        <begin position="584"/>
        <end position="586"/>
    </location>
</feature>
<feature type="helix" evidence="18">
    <location>
        <begin position="589"/>
        <end position="591"/>
    </location>
</feature>
<feature type="helix" evidence="18">
    <location>
        <begin position="599"/>
        <end position="611"/>
    </location>
</feature>
<feature type="helix" evidence="18">
    <location>
        <begin position="615"/>
        <end position="630"/>
    </location>
</feature>
<feature type="helix" evidence="18">
    <location>
        <begin position="659"/>
        <end position="662"/>
    </location>
</feature>
<feature type="helix" evidence="18">
    <location>
        <begin position="664"/>
        <end position="672"/>
    </location>
</feature>
<feature type="turn" evidence="19">
    <location>
        <begin position="676"/>
        <end position="679"/>
    </location>
</feature>
<feature type="turn" evidence="18">
    <location>
        <begin position="681"/>
        <end position="683"/>
    </location>
</feature>
<feature type="strand" evidence="18">
    <location>
        <begin position="684"/>
        <end position="686"/>
    </location>
</feature>
<feature type="strand" evidence="18">
    <location>
        <begin position="692"/>
        <end position="694"/>
    </location>
</feature>
<reference key="1">
    <citation type="journal article" date="1999" name="Glycobiology">
        <title>Cloning and expression of a specific human alpha1,2-mannosidase that trims Man9GlcNAc2 to Man8GlcNAc2 isomer B during N-glycan biosynthesis.</title>
        <authorList>
            <person name="Tremblay L.O."/>
            <person name="Herscovics A."/>
        </authorList>
    </citation>
    <scope>NUCLEOTIDE SEQUENCE [MRNA]</scope>
    <scope>BIOPHYSICOCHEMICAL PROPERTIES</scope>
    <scope>TISSUE SPECIFICITY</scope>
    <scope>VARIANT SER-59</scope>
    <source>
        <tissue>Fetal brain</tissue>
        <tissue>Liver</tissue>
        <tissue>Placenta</tissue>
        <tissue>Testis</tissue>
    </source>
</reference>
<reference key="2">
    <citation type="journal article" date="1999" name="J. Biol. Chem.">
        <title>Identification, expression, and characterization of a cDNA encoding human endoplasmic reticulum mannosidase I, the enzyme that catalyzes the first mannose trimming step in mammalian Asn-linked oligosaccharide biosynthesis.</title>
        <authorList>
            <person name="Gonzalez D.S."/>
            <person name="Karaveg K."/>
            <person name="Vandersall-Nairn A.S."/>
            <person name="Lal A."/>
            <person name="Moremen K.W."/>
        </authorList>
    </citation>
    <scope>NUCLEOTIDE SEQUENCE [MRNA] OF 37-699</scope>
    <scope>TISSUE SPECIFICITY</scope>
    <scope>ENZYME ACTIVITY</scope>
    <scope>ACTIVITY REGULATION</scope>
    <scope>SUBCELLULAR LOCATION</scope>
    <scope>VARIANT SER-59</scope>
</reference>
<reference key="3">
    <citation type="journal article" date="2003" name="Genome Res.">
        <title>The secreted protein discovery initiative (SPDI), a large-scale effort to identify novel human secreted and transmembrane proteins: a bioinformatics assessment.</title>
        <authorList>
            <person name="Clark H.F."/>
            <person name="Gurney A.L."/>
            <person name="Abaya E."/>
            <person name="Baker K."/>
            <person name="Baldwin D.T."/>
            <person name="Brush J."/>
            <person name="Chen J."/>
            <person name="Chow B."/>
            <person name="Chui C."/>
            <person name="Crowley C."/>
            <person name="Currell B."/>
            <person name="Deuel B."/>
            <person name="Dowd P."/>
            <person name="Eaton D."/>
            <person name="Foster J.S."/>
            <person name="Grimaldi C."/>
            <person name="Gu Q."/>
            <person name="Hass P.E."/>
            <person name="Heldens S."/>
            <person name="Huang A."/>
            <person name="Kim H.S."/>
            <person name="Klimowski L."/>
            <person name="Jin Y."/>
            <person name="Johnson S."/>
            <person name="Lee J."/>
            <person name="Lewis L."/>
            <person name="Liao D."/>
            <person name="Mark M.R."/>
            <person name="Robbie E."/>
            <person name="Sanchez C."/>
            <person name="Schoenfeld J."/>
            <person name="Seshagiri S."/>
            <person name="Simmons L."/>
            <person name="Singh J."/>
            <person name="Smith V."/>
            <person name="Stinson J."/>
            <person name="Vagts A."/>
            <person name="Vandlen R.L."/>
            <person name="Watanabe C."/>
            <person name="Wieand D."/>
            <person name="Woods K."/>
            <person name="Xie M.-H."/>
            <person name="Yansura D.G."/>
            <person name="Yi S."/>
            <person name="Yu G."/>
            <person name="Yuan J."/>
            <person name="Zhang M."/>
            <person name="Zhang Z."/>
            <person name="Goddard A.D."/>
            <person name="Wood W.I."/>
            <person name="Godowski P.J."/>
            <person name="Gray A.M."/>
        </authorList>
    </citation>
    <scope>NUCLEOTIDE SEQUENCE [LARGE SCALE MRNA]</scope>
    <scope>VARIANT SER-59</scope>
</reference>
<reference key="4">
    <citation type="journal article" date="2004" name="Nature">
        <title>DNA sequence and analysis of human chromosome 9.</title>
        <authorList>
            <person name="Humphray S.J."/>
            <person name="Oliver K."/>
            <person name="Hunt A.R."/>
            <person name="Plumb R.W."/>
            <person name="Loveland J.E."/>
            <person name="Howe K.L."/>
            <person name="Andrews T.D."/>
            <person name="Searle S."/>
            <person name="Hunt S.E."/>
            <person name="Scott C.E."/>
            <person name="Jones M.C."/>
            <person name="Ainscough R."/>
            <person name="Almeida J.P."/>
            <person name="Ambrose K.D."/>
            <person name="Ashwell R.I.S."/>
            <person name="Babbage A.K."/>
            <person name="Babbage S."/>
            <person name="Bagguley C.L."/>
            <person name="Bailey J."/>
            <person name="Banerjee R."/>
            <person name="Barker D.J."/>
            <person name="Barlow K.F."/>
            <person name="Bates K."/>
            <person name="Beasley H."/>
            <person name="Beasley O."/>
            <person name="Bird C.P."/>
            <person name="Bray-Allen S."/>
            <person name="Brown A.J."/>
            <person name="Brown J.Y."/>
            <person name="Burford D."/>
            <person name="Burrill W."/>
            <person name="Burton J."/>
            <person name="Carder C."/>
            <person name="Carter N.P."/>
            <person name="Chapman J.C."/>
            <person name="Chen Y."/>
            <person name="Clarke G."/>
            <person name="Clark S.Y."/>
            <person name="Clee C.M."/>
            <person name="Clegg S."/>
            <person name="Collier R.E."/>
            <person name="Corby N."/>
            <person name="Crosier M."/>
            <person name="Cummings A.T."/>
            <person name="Davies J."/>
            <person name="Dhami P."/>
            <person name="Dunn M."/>
            <person name="Dutta I."/>
            <person name="Dyer L.W."/>
            <person name="Earthrowl M.E."/>
            <person name="Faulkner L."/>
            <person name="Fleming C.J."/>
            <person name="Frankish A."/>
            <person name="Frankland J.A."/>
            <person name="French L."/>
            <person name="Fricker D.G."/>
            <person name="Garner P."/>
            <person name="Garnett J."/>
            <person name="Ghori J."/>
            <person name="Gilbert J.G.R."/>
            <person name="Glison C."/>
            <person name="Grafham D.V."/>
            <person name="Gribble S."/>
            <person name="Griffiths C."/>
            <person name="Griffiths-Jones S."/>
            <person name="Grocock R."/>
            <person name="Guy J."/>
            <person name="Hall R.E."/>
            <person name="Hammond S."/>
            <person name="Harley J.L."/>
            <person name="Harrison E.S.I."/>
            <person name="Hart E.A."/>
            <person name="Heath P.D."/>
            <person name="Henderson C.D."/>
            <person name="Hopkins B.L."/>
            <person name="Howard P.J."/>
            <person name="Howden P.J."/>
            <person name="Huckle E."/>
            <person name="Johnson C."/>
            <person name="Johnson D."/>
            <person name="Joy A.A."/>
            <person name="Kay M."/>
            <person name="Keenan S."/>
            <person name="Kershaw J.K."/>
            <person name="Kimberley A.M."/>
            <person name="King A."/>
            <person name="Knights A."/>
            <person name="Laird G.K."/>
            <person name="Langford C."/>
            <person name="Lawlor S."/>
            <person name="Leongamornlert D.A."/>
            <person name="Leversha M."/>
            <person name="Lloyd C."/>
            <person name="Lloyd D.M."/>
            <person name="Lovell J."/>
            <person name="Martin S."/>
            <person name="Mashreghi-Mohammadi M."/>
            <person name="Matthews L."/>
            <person name="McLaren S."/>
            <person name="McLay K.E."/>
            <person name="McMurray A."/>
            <person name="Milne S."/>
            <person name="Nickerson T."/>
            <person name="Nisbett J."/>
            <person name="Nordsiek G."/>
            <person name="Pearce A.V."/>
            <person name="Peck A.I."/>
            <person name="Porter K.M."/>
            <person name="Pandian R."/>
            <person name="Pelan S."/>
            <person name="Phillimore B."/>
            <person name="Povey S."/>
            <person name="Ramsey Y."/>
            <person name="Rand V."/>
            <person name="Scharfe M."/>
            <person name="Sehra H.K."/>
            <person name="Shownkeen R."/>
            <person name="Sims S.K."/>
            <person name="Skuce C.D."/>
            <person name="Smith M."/>
            <person name="Steward C.A."/>
            <person name="Swarbreck D."/>
            <person name="Sycamore N."/>
            <person name="Tester J."/>
            <person name="Thorpe A."/>
            <person name="Tracey A."/>
            <person name="Tromans A."/>
            <person name="Thomas D.W."/>
            <person name="Wall M."/>
            <person name="Wallis J.M."/>
            <person name="West A.P."/>
            <person name="Whitehead S.L."/>
            <person name="Willey D.L."/>
            <person name="Williams S.A."/>
            <person name="Wilming L."/>
            <person name="Wray P.W."/>
            <person name="Young L."/>
            <person name="Ashurst J.L."/>
            <person name="Coulson A."/>
            <person name="Blocker H."/>
            <person name="Durbin R.M."/>
            <person name="Sulston J.E."/>
            <person name="Hubbard T."/>
            <person name="Jackson M.J."/>
            <person name="Bentley D.R."/>
            <person name="Beck S."/>
            <person name="Rogers J."/>
            <person name="Dunham I."/>
        </authorList>
    </citation>
    <scope>NUCLEOTIDE SEQUENCE [LARGE SCALE GENOMIC DNA]</scope>
</reference>
<reference key="5">
    <citation type="journal article" date="2004" name="Genome Res.">
        <title>The status, quality, and expansion of the NIH full-length cDNA project: the Mammalian Gene Collection (MGC).</title>
        <authorList>
            <consortium name="The MGC Project Team"/>
        </authorList>
    </citation>
    <scope>NUCLEOTIDE SEQUENCE [LARGE SCALE MRNA]</scope>
    <scope>VARIANT SER-59</scope>
    <source>
        <tissue>Lung</tissue>
        <tissue>Placenta</tissue>
    </source>
</reference>
<reference key="6">
    <citation type="journal article" date="2002" name="Glycobiology">
        <title>The specificity of the yeast and human class I ER alpha 1,2-mannosidases involved in ER quality control is not as strict previously reported.</title>
        <authorList>
            <person name="Herscovics A."/>
            <person name="Romero P.A."/>
            <person name="Tremblay L.O."/>
        </authorList>
    </citation>
    <scope>FUNCTION</scope>
    <scope>CATALYTIC ACTIVITY</scope>
    <scope>SUBSTRATE SPECIFICITY</scope>
</reference>
<reference key="7">
    <citation type="journal article" date="2008" name="Mol. Biol. Cell">
        <title>Endoplasmic reticulum (ER) mannosidase I is compartmentalized and required for N-glycan trimming to Man5-6GlcNAc2 in glycoprotein ER-associated degradation.</title>
        <authorList>
            <person name="Avezov E."/>
            <person name="Frenkel Z."/>
            <person name="Ehrlich M."/>
            <person name="Herscovics A."/>
            <person name="Lederkremer G.Z."/>
        </authorList>
    </citation>
    <scope>FUNCTION</scope>
</reference>
<reference key="8">
    <citation type="journal article" date="2015" name="Proteomics">
        <title>N-terminome analysis of the human mitochondrial proteome.</title>
        <authorList>
            <person name="Vaca Jacome A.S."/>
            <person name="Rabilloud T."/>
            <person name="Schaeffer-Reiss C."/>
            <person name="Rompais M."/>
            <person name="Ayoub D."/>
            <person name="Lane L."/>
            <person name="Bairoch A."/>
            <person name="Van Dorsselaer A."/>
            <person name="Carapito C."/>
        </authorList>
    </citation>
    <scope>IDENTIFICATION BY MASS SPECTROMETRY [LARGE SCALE ANALYSIS]</scope>
</reference>
<reference key="9">
    <citation type="journal article" date="2000" name="J. Biol. Chem.">
        <title>Structural basis for catalysis and inhibition of N-glycan processing class I alpha 1,2-mannosidases.</title>
        <authorList>
            <person name="Vallee F."/>
            <person name="Karaveg K."/>
            <person name="Herscovics A."/>
            <person name="Moremen K.W."/>
            <person name="Howell P.L."/>
        </authorList>
    </citation>
    <scope>X-RAY CRYSTALLOGRAPHY (1.9 ANGSTROMS) OF 243-699</scope>
    <scope>DISULFIDE BOND</scope>
</reference>
<reference key="10">
    <citation type="journal article" date="2005" name="J. Biol. Chem.">
        <title>Mechanism of class 1 (glycosylhydrolase family 47) {alpha}-mannosidases involved in N-glycan processing and endoplasmic reticulum quality control.</title>
        <authorList>
            <person name="Karaveg K."/>
            <person name="Siriwardena A."/>
            <person name="Tempel W."/>
            <person name="Liu Z.J."/>
            <person name="Glushka J."/>
            <person name="Wang B.C."/>
            <person name="Moremen K.W."/>
        </authorList>
    </citation>
    <scope>X-RAY CRYSTALLOGRAPHY (1.41 ANGSTROMS) OF 172-699 IN COMPLEX WITH A THIO-DISACCHARIDE SUBSTRATE ANALOG</scope>
    <scope>ENZYME ACTIVITY</scope>
    <scope>MUTAGENESIS OF GLU-330; ASP-463; HIS-524 AND GLU-599</scope>
</reference>
<reference key="11">
    <citation type="journal article" date="2011" name="Am. J. Hum. Genet.">
        <title>Mutations in the alpha 1,2-mannosidase gene, MAN1B1, cause autosomal-recessive intellectual disability.</title>
        <authorList>
            <person name="Rafiq M.A."/>
            <person name="Kuss A.W."/>
            <person name="Puettmann L."/>
            <person name="Noor A."/>
            <person name="Ramiah A."/>
            <person name="Ali G."/>
            <person name="Hu H."/>
            <person name="Kerio N.A."/>
            <person name="Xiang Y."/>
            <person name="Garshasbi M."/>
            <person name="Khan M.A."/>
            <person name="Ishak G.E."/>
            <person name="Weksberg R."/>
            <person name="Ullmann R."/>
            <person name="Tzschach A."/>
            <person name="Kahrizi K."/>
            <person name="Mahmood K."/>
            <person name="Naeem F."/>
            <person name="Ayub M."/>
            <person name="Moremen K.W."/>
            <person name="Vincent J.B."/>
            <person name="Ropers H.H."/>
            <person name="Ansar M."/>
            <person name="Najmabadi H."/>
        </authorList>
    </citation>
    <scope>VARIANTS RAFQS CYS-334 AND LYS-397</scope>
    <scope>CHARACTERIZATION OF VARIANTS RAFQS CYS-334 AND LYS-397</scope>
</reference>
<accession>Q9UKM7</accession>
<accession>Q5VSG3</accession>
<accession>Q9BRS9</accession>
<accession>Q9Y5K7</accession>
<evidence type="ECO:0000250" key="1">
    <source>
        <dbReference type="UniProtKB" id="P31723"/>
    </source>
</evidence>
<evidence type="ECO:0000250" key="2">
    <source>
        <dbReference type="UniProtKB" id="P32906"/>
    </source>
</evidence>
<evidence type="ECO:0000250" key="3">
    <source>
        <dbReference type="UniProtKB" id="P45700"/>
    </source>
</evidence>
<evidence type="ECO:0000255" key="4"/>
<evidence type="ECO:0000256" key="5">
    <source>
        <dbReference type="SAM" id="MobiDB-lite"/>
    </source>
</evidence>
<evidence type="ECO:0000269" key="6">
    <source>
    </source>
</evidence>
<evidence type="ECO:0000269" key="7">
    <source>
    </source>
</evidence>
<evidence type="ECO:0000269" key="8">
    <source>
    </source>
</evidence>
<evidence type="ECO:0000269" key="9">
    <source>
    </source>
</evidence>
<evidence type="ECO:0000269" key="10">
    <source>
    </source>
</evidence>
<evidence type="ECO:0000269" key="11">
    <source>
    </source>
</evidence>
<evidence type="ECO:0000269" key="12">
    <source>
    </source>
</evidence>
<evidence type="ECO:0000269" key="13">
    <source>
    </source>
</evidence>
<evidence type="ECO:0000269" key="14">
    <source>
    </source>
</evidence>
<evidence type="ECO:0000305" key="15"/>
<evidence type="ECO:0007829" key="16">
    <source>
        <dbReference type="PDB" id="1FO2"/>
    </source>
</evidence>
<evidence type="ECO:0007829" key="17">
    <source>
        <dbReference type="PDB" id="1FO3"/>
    </source>
</evidence>
<evidence type="ECO:0007829" key="18">
    <source>
        <dbReference type="PDB" id="1X9D"/>
    </source>
</evidence>
<evidence type="ECO:0007829" key="19">
    <source>
        <dbReference type="PDB" id="5KIJ"/>
    </source>
</evidence>